<sequence>MSESKVYPVKAHISNGALLDKAGYEAMYRASVQDPDAFWGEQGKIIDWMKPYTKVKNTSYDPGHVSIKWYEDGLLNVSANCLDRHLAQRGDKVAIIWEGDNPAEDRKLTYRELHAEVCKFSNVLKAQGVHRGDVVCLYMPMVPEAAIAMLACTRIGAVHSIVFGGFSPEALAGRIIDSGSSIVITADEGLRGGRPVPLKKNVDEALTNPDTRVSKVIVLKRTGGNVAWHNHRDIWWHEATAAASSDCPPEAMNAEDPLFVLYTSGSTGKPKGVLHTTGGYLVYATLTFKYVFDYHEEDIYWCTADVGWVTGHSYLVYGPLANGATTIMFEGVPNYPATNRMSQVVDKHQVTILYTAPTAIRALMAKGRDAVEGTSRQSLRIMGSVGEPINPEAWEWYYRTIGEERCPIVDTWWQTETGGILISPLPGVTDLKPGSATRPFFGVQPALVDNMGEPLEGATEGNLVITDSWPGQMRTVFGDHERFEQTYFSTFPGRYFTGDGARRDEDGYYWITGRVDDVLNVSGHRMGTAEIESALVAHPKIAEAAVVGVPHEIKGQGIYAYVTLIAGEEPSRELHKEVKEWVRKEIGAIATPDVIHWAEGLPKTRSGKIMRRILRKIATGETDSLGDISTLADPGVVDKLIREKSEAA</sequence>
<reference key="1">
    <citation type="journal article" date="2008" name="BMC Genomics">
        <title>The genome of Aeromonas salmonicida subsp. salmonicida A449: insights into the evolution of a fish pathogen.</title>
        <authorList>
            <person name="Reith M.E."/>
            <person name="Singh R.K."/>
            <person name="Curtis B."/>
            <person name="Boyd J.M."/>
            <person name="Bouevitch A."/>
            <person name="Kimball J."/>
            <person name="Munholland J."/>
            <person name="Murphy C."/>
            <person name="Sarty D."/>
            <person name="Williams J."/>
            <person name="Nash J.H."/>
            <person name="Johnson S.C."/>
            <person name="Brown L.L."/>
        </authorList>
    </citation>
    <scope>NUCLEOTIDE SEQUENCE [LARGE SCALE GENOMIC DNA]</scope>
    <source>
        <strain>A449</strain>
    </source>
</reference>
<protein>
    <recommendedName>
        <fullName evidence="1">Acetyl-coenzyme A synthetase</fullName>
        <shortName evidence="1">AcCoA synthetase</shortName>
        <shortName evidence="1">Acs</shortName>
        <ecNumber evidence="1">6.2.1.1</ecNumber>
    </recommendedName>
    <alternativeName>
        <fullName evidence="1">Acetate--CoA ligase</fullName>
    </alternativeName>
    <alternativeName>
        <fullName evidence="1">Acyl-activating enzyme</fullName>
    </alternativeName>
</protein>
<accession>A4SJM6</accession>
<proteinExistence type="inferred from homology"/>
<gene>
    <name evidence="1" type="primary">acsA</name>
    <name type="ordered locus">ASA_0967</name>
</gene>
<keyword id="KW-0007">Acetylation</keyword>
<keyword id="KW-0067">ATP-binding</keyword>
<keyword id="KW-0436">Ligase</keyword>
<keyword id="KW-0460">Magnesium</keyword>
<keyword id="KW-0479">Metal-binding</keyword>
<keyword id="KW-0547">Nucleotide-binding</keyword>
<dbReference type="EC" id="6.2.1.1" evidence="1"/>
<dbReference type="EMBL" id="CP000644">
    <property type="protein sequence ID" value="ABO89098.1"/>
    <property type="molecule type" value="Genomic_DNA"/>
</dbReference>
<dbReference type="SMR" id="A4SJM6"/>
<dbReference type="STRING" id="29491.GCA_000820065_01218"/>
<dbReference type="KEGG" id="asa:ASA_0967"/>
<dbReference type="eggNOG" id="COG0365">
    <property type="taxonomic scope" value="Bacteria"/>
</dbReference>
<dbReference type="HOGENOM" id="CLU_000022_3_6_6"/>
<dbReference type="Proteomes" id="UP000000225">
    <property type="component" value="Chromosome"/>
</dbReference>
<dbReference type="GO" id="GO:0005829">
    <property type="term" value="C:cytosol"/>
    <property type="evidence" value="ECO:0007669"/>
    <property type="project" value="TreeGrafter"/>
</dbReference>
<dbReference type="GO" id="GO:0003987">
    <property type="term" value="F:acetate-CoA ligase activity"/>
    <property type="evidence" value="ECO:0007669"/>
    <property type="project" value="UniProtKB-UniRule"/>
</dbReference>
<dbReference type="GO" id="GO:0016208">
    <property type="term" value="F:AMP binding"/>
    <property type="evidence" value="ECO:0007669"/>
    <property type="project" value="InterPro"/>
</dbReference>
<dbReference type="GO" id="GO:0005524">
    <property type="term" value="F:ATP binding"/>
    <property type="evidence" value="ECO:0007669"/>
    <property type="project" value="UniProtKB-KW"/>
</dbReference>
<dbReference type="GO" id="GO:0046872">
    <property type="term" value="F:metal ion binding"/>
    <property type="evidence" value="ECO:0007669"/>
    <property type="project" value="UniProtKB-KW"/>
</dbReference>
<dbReference type="GO" id="GO:0019427">
    <property type="term" value="P:acetyl-CoA biosynthetic process from acetate"/>
    <property type="evidence" value="ECO:0007669"/>
    <property type="project" value="InterPro"/>
</dbReference>
<dbReference type="CDD" id="cd05966">
    <property type="entry name" value="ACS"/>
    <property type="match status" value="1"/>
</dbReference>
<dbReference type="FunFam" id="3.30.300.30:FF:000004">
    <property type="entry name" value="Acetyl-coenzyme A synthetase"/>
    <property type="match status" value="1"/>
</dbReference>
<dbReference type="FunFam" id="3.40.50.12780:FF:000001">
    <property type="entry name" value="Acetyl-coenzyme A synthetase"/>
    <property type="match status" value="1"/>
</dbReference>
<dbReference type="Gene3D" id="3.30.300.30">
    <property type="match status" value="1"/>
</dbReference>
<dbReference type="Gene3D" id="3.40.50.12780">
    <property type="entry name" value="N-terminal domain of ligase-like"/>
    <property type="match status" value="1"/>
</dbReference>
<dbReference type="HAMAP" id="MF_01123">
    <property type="entry name" value="Ac_CoA_synth"/>
    <property type="match status" value="1"/>
</dbReference>
<dbReference type="InterPro" id="IPR011904">
    <property type="entry name" value="Ac_CoA_lig"/>
</dbReference>
<dbReference type="InterPro" id="IPR032387">
    <property type="entry name" value="ACAS_N"/>
</dbReference>
<dbReference type="InterPro" id="IPR025110">
    <property type="entry name" value="AMP-bd_C"/>
</dbReference>
<dbReference type="InterPro" id="IPR045851">
    <property type="entry name" value="AMP-bd_C_sf"/>
</dbReference>
<dbReference type="InterPro" id="IPR020845">
    <property type="entry name" value="AMP-binding_CS"/>
</dbReference>
<dbReference type="InterPro" id="IPR000873">
    <property type="entry name" value="AMP-dep_synth/lig_dom"/>
</dbReference>
<dbReference type="InterPro" id="IPR042099">
    <property type="entry name" value="ANL_N_sf"/>
</dbReference>
<dbReference type="NCBIfam" id="TIGR02188">
    <property type="entry name" value="Ac_CoA_lig_AcsA"/>
    <property type="match status" value="1"/>
</dbReference>
<dbReference type="NCBIfam" id="NF001208">
    <property type="entry name" value="PRK00174.1"/>
    <property type="match status" value="1"/>
</dbReference>
<dbReference type="PANTHER" id="PTHR24095">
    <property type="entry name" value="ACETYL-COENZYME A SYNTHETASE"/>
    <property type="match status" value="1"/>
</dbReference>
<dbReference type="PANTHER" id="PTHR24095:SF243">
    <property type="entry name" value="ACETYL-COENZYME A SYNTHETASE"/>
    <property type="match status" value="1"/>
</dbReference>
<dbReference type="Pfam" id="PF16177">
    <property type="entry name" value="ACAS_N"/>
    <property type="match status" value="1"/>
</dbReference>
<dbReference type="Pfam" id="PF00501">
    <property type="entry name" value="AMP-binding"/>
    <property type="match status" value="1"/>
</dbReference>
<dbReference type="Pfam" id="PF13193">
    <property type="entry name" value="AMP-binding_C"/>
    <property type="match status" value="1"/>
</dbReference>
<dbReference type="SUPFAM" id="SSF56801">
    <property type="entry name" value="Acetyl-CoA synthetase-like"/>
    <property type="match status" value="1"/>
</dbReference>
<dbReference type="PROSITE" id="PS00455">
    <property type="entry name" value="AMP_BINDING"/>
    <property type="match status" value="1"/>
</dbReference>
<evidence type="ECO:0000255" key="1">
    <source>
        <dbReference type="HAMAP-Rule" id="MF_01123"/>
    </source>
</evidence>
<comment type="function">
    <text evidence="1">Catalyzes the conversion of acetate into acetyl-CoA (AcCoA), an essential intermediate at the junction of anabolic and catabolic pathways. AcsA undergoes a two-step reaction. In the first half reaction, AcsA combines acetate with ATP to form acetyl-adenylate (AcAMP) intermediate. In the second half reaction, it can then transfer the acetyl group from AcAMP to the sulfhydryl group of CoA, forming the product AcCoA.</text>
</comment>
<comment type="catalytic activity">
    <reaction evidence="1">
        <text>acetate + ATP + CoA = acetyl-CoA + AMP + diphosphate</text>
        <dbReference type="Rhea" id="RHEA:23176"/>
        <dbReference type="ChEBI" id="CHEBI:30089"/>
        <dbReference type="ChEBI" id="CHEBI:30616"/>
        <dbReference type="ChEBI" id="CHEBI:33019"/>
        <dbReference type="ChEBI" id="CHEBI:57287"/>
        <dbReference type="ChEBI" id="CHEBI:57288"/>
        <dbReference type="ChEBI" id="CHEBI:456215"/>
        <dbReference type="EC" id="6.2.1.1"/>
    </reaction>
</comment>
<comment type="cofactor">
    <cofactor evidence="1">
        <name>Mg(2+)</name>
        <dbReference type="ChEBI" id="CHEBI:18420"/>
    </cofactor>
</comment>
<comment type="PTM">
    <text evidence="1">Acetylated. Deacetylation by the SIR2-homolog deacetylase activates the enzyme.</text>
</comment>
<comment type="similarity">
    <text evidence="1">Belongs to the ATP-dependent AMP-binding enzyme family.</text>
</comment>
<organism>
    <name type="scientific">Aeromonas salmonicida (strain A449)</name>
    <dbReference type="NCBI Taxonomy" id="382245"/>
    <lineage>
        <taxon>Bacteria</taxon>
        <taxon>Pseudomonadati</taxon>
        <taxon>Pseudomonadota</taxon>
        <taxon>Gammaproteobacteria</taxon>
        <taxon>Aeromonadales</taxon>
        <taxon>Aeromonadaceae</taxon>
        <taxon>Aeromonas</taxon>
    </lineage>
</organism>
<feature type="chain" id="PRO_1000065266" description="Acetyl-coenzyme A synthetase">
    <location>
        <begin position="1"/>
        <end position="648"/>
    </location>
</feature>
<feature type="binding site" evidence="1">
    <location>
        <begin position="191"/>
        <end position="194"/>
    </location>
    <ligand>
        <name>CoA</name>
        <dbReference type="ChEBI" id="CHEBI:57287"/>
    </ligand>
</feature>
<feature type="binding site" evidence="1">
    <location>
        <position position="310"/>
    </location>
    <ligand>
        <name>CoA</name>
        <dbReference type="ChEBI" id="CHEBI:57287"/>
    </ligand>
</feature>
<feature type="binding site" evidence="1">
    <location>
        <position position="334"/>
    </location>
    <ligand>
        <name>CoA</name>
        <dbReference type="ChEBI" id="CHEBI:57287"/>
    </ligand>
</feature>
<feature type="binding site" evidence="1">
    <location>
        <begin position="386"/>
        <end position="388"/>
    </location>
    <ligand>
        <name>ATP</name>
        <dbReference type="ChEBI" id="CHEBI:30616"/>
    </ligand>
</feature>
<feature type="binding site" evidence="1">
    <location>
        <begin position="410"/>
        <end position="415"/>
    </location>
    <ligand>
        <name>ATP</name>
        <dbReference type="ChEBI" id="CHEBI:30616"/>
    </ligand>
</feature>
<feature type="binding site" evidence="1">
    <location>
        <position position="499"/>
    </location>
    <ligand>
        <name>ATP</name>
        <dbReference type="ChEBI" id="CHEBI:30616"/>
    </ligand>
</feature>
<feature type="binding site" evidence="1">
    <location>
        <position position="514"/>
    </location>
    <ligand>
        <name>ATP</name>
        <dbReference type="ChEBI" id="CHEBI:30616"/>
    </ligand>
</feature>
<feature type="binding site" evidence="1">
    <location>
        <position position="522"/>
    </location>
    <ligand>
        <name>CoA</name>
        <dbReference type="ChEBI" id="CHEBI:57287"/>
    </ligand>
</feature>
<feature type="binding site" evidence="1">
    <location>
        <position position="525"/>
    </location>
    <ligand>
        <name>ATP</name>
        <dbReference type="ChEBI" id="CHEBI:30616"/>
    </ligand>
</feature>
<feature type="binding site" evidence="1">
    <location>
        <position position="536"/>
    </location>
    <ligand>
        <name>Mg(2+)</name>
        <dbReference type="ChEBI" id="CHEBI:18420"/>
    </ligand>
</feature>
<feature type="binding site" evidence="1">
    <location>
        <position position="538"/>
    </location>
    <ligand>
        <name>Mg(2+)</name>
        <dbReference type="ChEBI" id="CHEBI:18420"/>
    </ligand>
</feature>
<feature type="binding site" evidence="1">
    <location>
        <position position="541"/>
    </location>
    <ligand>
        <name>Mg(2+)</name>
        <dbReference type="ChEBI" id="CHEBI:18420"/>
    </ligand>
</feature>
<feature type="binding site">
    <location>
        <position position="583"/>
    </location>
    <ligand>
        <name>CoA</name>
        <dbReference type="ChEBI" id="CHEBI:57287"/>
    </ligand>
</feature>
<feature type="modified residue" description="N6-acetyllysine" evidence="1">
    <location>
        <position position="608"/>
    </location>
</feature>
<name>ACSA_AERS4</name>